<protein>
    <recommendedName>
        <fullName evidence="1">Peptidyl-tRNA hydrolase</fullName>
        <shortName evidence="1">Pth</shortName>
        <ecNumber evidence="1">3.1.1.29</ecNumber>
    </recommendedName>
</protein>
<name>PTH_SACD2</name>
<keyword id="KW-0963">Cytoplasm</keyword>
<keyword id="KW-0378">Hydrolase</keyword>
<keyword id="KW-1185">Reference proteome</keyword>
<keyword id="KW-0694">RNA-binding</keyword>
<keyword id="KW-0820">tRNA-binding</keyword>
<comment type="function">
    <text evidence="1">Hydrolyzes ribosome-free peptidyl-tRNAs (with 1 or more amino acids incorporated), which drop off the ribosome during protein synthesis, or as a result of ribosome stalling.</text>
</comment>
<comment type="function">
    <text evidence="1">Catalyzes the release of premature peptidyl moieties from peptidyl-tRNA molecules trapped in stalled 50S ribosomal subunits, and thus maintains levels of free tRNAs and 50S ribosomes.</text>
</comment>
<comment type="catalytic activity">
    <reaction evidence="1">
        <text>an N-acyl-L-alpha-aminoacyl-tRNA + H2O = an N-acyl-L-amino acid + a tRNA + H(+)</text>
        <dbReference type="Rhea" id="RHEA:54448"/>
        <dbReference type="Rhea" id="RHEA-COMP:10123"/>
        <dbReference type="Rhea" id="RHEA-COMP:13883"/>
        <dbReference type="ChEBI" id="CHEBI:15377"/>
        <dbReference type="ChEBI" id="CHEBI:15378"/>
        <dbReference type="ChEBI" id="CHEBI:59874"/>
        <dbReference type="ChEBI" id="CHEBI:78442"/>
        <dbReference type="ChEBI" id="CHEBI:138191"/>
        <dbReference type="EC" id="3.1.1.29"/>
    </reaction>
</comment>
<comment type="subunit">
    <text evidence="1">Monomer.</text>
</comment>
<comment type="subcellular location">
    <subcellularLocation>
        <location evidence="1">Cytoplasm</location>
    </subcellularLocation>
</comment>
<comment type="similarity">
    <text evidence="1">Belongs to the PTH family.</text>
</comment>
<feature type="chain" id="PRO_0000264100" description="Peptidyl-tRNA hydrolase">
    <location>
        <begin position="1"/>
        <end position="197"/>
    </location>
</feature>
<feature type="active site" description="Proton acceptor" evidence="1">
    <location>
        <position position="26"/>
    </location>
</feature>
<feature type="binding site" evidence="1">
    <location>
        <position position="21"/>
    </location>
    <ligand>
        <name>tRNA</name>
        <dbReference type="ChEBI" id="CHEBI:17843"/>
    </ligand>
</feature>
<feature type="binding site" evidence="1">
    <location>
        <position position="72"/>
    </location>
    <ligand>
        <name>tRNA</name>
        <dbReference type="ChEBI" id="CHEBI:17843"/>
    </ligand>
</feature>
<feature type="binding site" evidence="1">
    <location>
        <position position="74"/>
    </location>
    <ligand>
        <name>tRNA</name>
        <dbReference type="ChEBI" id="CHEBI:17843"/>
    </ligand>
</feature>
<feature type="binding site" evidence="1">
    <location>
        <position position="120"/>
    </location>
    <ligand>
        <name>tRNA</name>
        <dbReference type="ChEBI" id="CHEBI:17843"/>
    </ligand>
</feature>
<feature type="site" description="Discriminates between blocked and unblocked aminoacyl-tRNA" evidence="1">
    <location>
        <position position="16"/>
    </location>
</feature>
<feature type="site" description="Stabilizes the basic form of H active site to accept a proton" evidence="1">
    <location>
        <position position="99"/>
    </location>
</feature>
<organism>
    <name type="scientific">Saccharophagus degradans (strain 2-40 / ATCC 43961 / DSM 17024)</name>
    <dbReference type="NCBI Taxonomy" id="203122"/>
    <lineage>
        <taxon>Bacteria</taxon>
        <taxon>Pseudomonadati</taxon>
        <taxon>Pseudomonadota</taxon>
        <taxon>Gammaproteobacteria</taxon>
        <taxon>Cellvibrionales</taxon>
        <taxon>Cellvibrionaceae</taxon>
        <taxon>Saccharophagus</taxon>
    </lineage>
</organism>
<sequence length="197" mass="21516">MKTPDTCIQLIVGLGNPGNEYEHTRHNAGQDFVEELARDLGQPLSPTPKFFGHFSRLNINGKDVRLLVPTTYMNRSGQAVAAVCQFYKIPPEAVLVVHDELDLPPGKARLKIGGGHGGHNGLRDIISSLGNNKDFGRLRLGIGHPGNAKLVSNYVLKKAPSEEFNAIEDAIRAAQPHVADLAKGDWEKAMRELHSKT</sequence>
<gene>
    <name evidence="1" type="primary">pth</name>
    <name type="ordered locus">Sde_3258</name>
</gene>
<accession>Q21FL6</accession>
<proteinExistence type="inferred from homology"/>
<evidence type="ECO:0000255" key="1">
    <source>
        <dbReference type="HAMAP-Rule" id="MF_00083"/>
    </source>
</evidence>
<reference key="1">
    <citation type="journal article" date="2008" name="PLoS Genet.">
        <title>Complete genome sequence of the complex carbohydrate-degrading marine bacterium, Saccharophagus degradans strain 2-40 T.</title>
        <authorList>
            <person name="Weiner R.M."/>
            <person name="Taylor L.E. II"/>
            <person name="Henrissat B."/>
            <person name="Hauser L."/>
            <person name="Land M."/>
            <person name="Coutinho P.M."/>
            <person name="Rancurel C."/>
            <person name="Saunders E.H."/>
            <person name="Longmire A.G."/>
            <person name="Zhang H."/>
            <person name="Bayer E.A."/>
            <person name="Gilbert H.J."/>
            <person name="Larimer F."/>
            <person name="Zhulin I.B."/>
            <person name="Ekborg N.A."/>
            <person name="Lamed R."/>
            <person name="Richardson P.M."/>
            <person name="Borovok I."/>
            <person name="Hutcheson S."/>
        </authorList>
    </citation>
    <scope>NUCLEOTIDE SEQUENCE [LARGE SCALE GENOMIC DNA]</scope>
    <source>
        <strain>2-40 / ATCC 43961 / DSM 17024</strain>
    </source>
</reference>
<dbReference type="EC" id="3.1.1.29" evidence="1"/>
<dbReference type="EMBL" id="CP000282">
    <property type="protein sequence ID" value="ABD82513.1"/>
    <property type="molecule type" value="Genomic_DNA"/>
</dbReference>
<dbReference type="RefSeq" id="WP_011469729.1">
    <property type="nucleotide sequence ID" value="NC_007912.1"/>
</dbReference>
<dbReference type="SMR" id="Q21FL6"/>
<dbReference type="STRING" id="203122.Sde_3258"/>
<dbReference type="GeneID" id="98614879"/>
<dbReference type="KEGG" id="sde:Sde_3258"/>
<dbReference type="eggNOG" id="COG0193">
    <property type="taxonomic scope" value="Bacteria"/>
</dbReference>
<dbReference type="HOGENOM" id="CLU_062456_3_1_6"/>
<dbReference type="OrthoDB" id="9800507at2"/>
<dbReference type="Proteomes" id="UP000001947">
    <property type="component" value="Chromosome"/>
</dbReference>
<dbReference type="GO" id="GO:0005737">
    <property type="term" value="C:cytoplasm"/>
    <property type="evidence" value="ECO:0007669"/>
    <property type="project" value="UniProtKB-SubCell"/>
</dbReference>
<dbReference type="GO" id="GO:0004045">
    <property type="term" value="F:peptidyl-tRNA hydrolase activity"/>
    <property type="evidence" value="ECO:0007669"/>
    <property type="project" value="UniProtKB-UniRule"/>
</dbReference>
<dbReference type="GO" id="GO:0000049">
    <property type="term" value="F:tRNA binding"/>
    <property type="evidence" value="ECO:0007669"/>
    <property type="project" value="UniProtKB-UniRule"/>
</dbReference>
<dbReference type="GO" id="GO:0006515">
    <property type="term" value="P:protein quality control for misfolded or incompletely synthesized proteins"/>
    <property type="evidence" value="ECO:0007669"/>
    <property type="project" value="UniProtKB-UniRule"/>
</dbReference>
<dbReference type="GO" id="GO:0072344">
    <property type="term" value="P:rescue of stalled ribosome"/>
    <property type="evidence" value="ECO:0007669"/>
    <property type="project" value="UniProtKB-UniRule"/>
</dbReference>
<dbReference type="CDD" id="cd00462">
    <property type="entry name" value="PTH"/>
    <property type="match status" value="1"/>
</dbReference>
<dbReference type="FunFam" id="3.40.50.1470:FF:000001">
    <property type="entry name" value="Peptidyl-tRNA hydrolase"/>
    <property type="match status" value="1"/>
</dbReference>
<dbReference type="Gene3D" id="3.40.50.1470">
    <property type="entry name" value="Peptidyl-tRNA hydrolase"/>
    <property type="match status" value="1"/>
</dbReference>
<dbReference type="HAMAP" id="MF_00083">
    <property type="entry name" value="Pept_tRNA_hydro_bact"/>
    <property type="match status" value="1"/>
</dbReference>
<dbReference type="InterPro" id="IPR001328">
    <property type="entry name" value="Pept_tRNA_hydro"/>
</dbReference>
<dbReference type="InterPro" id="IPR018171">
    <property type="entry name" value="Pept_tRNA_hydro_CS"/>
</dbReference>
<dbReference type="InterPro" id="IPR036416">
    <property type="entry name" value="Pept_tRNA_hydro_sf"/>
</dbReference>
<dbReference type="NCBIfam" id="TIGR00447">
    <property type="entry name" value="pth"/>
    <property type="match status" value="1"/>
</dbReference>
<dbReference type="PANTHER" id="PTHR17224">
    <property type="entry name" value="PEPTIDYL-TRNA HYDROLASE"/>
    <property type="match status" value="1"/>
</dbReference>
<dbReference type="PANTHER" id="PTHR17224:SF1">
    <property type="entry name" value="PEPTIDYL-TRNA HYDROLASE"/>
    <property type="match status" value="1"/>
</dbReference>
<dbReference type="Pfam" id="PF01195">
    <property type="entry name" value="Pept_tRNA_hydro"/>
    <property type="match status" value="1"/>
</dbReference>
<dbReference type="SUPFAM" id="SSF53178">
    <property type="entry name" value="Peptidyl-tRNA hydrolase-like"/>
    <property type="match status" value="1"/>
</dbReference>
<dbReference type="PROSITE" id="PS01195">
    <property type="entry name" value="PEPT_TRNA_HYDROL_1"/>
    <property type="match status" value="1"/>
</dbReference>
<dbReference type="PROSITE" id="PS01196">
    <property type="entry name" value="PEPT_TRNA_HYDROL_2"/>
    <property type="match status" value="1"/>
</dbReference>